<proteinExistence type="inferred from homology"/>
<comment type="function">
    <text evidence="1">The glycine cleavage system catalyzes the degradation of glycine. The H protein shuttles the methylamine group of glycine from the P protein to the T protein.</text>
</comment>
<comment type="function">
    <text evidence="1">Is also involved in protein lipoylation via its role as an octanoyl/lipoyl carrier protein intermediate.</text>
</comment>
<comment type="cofactor">
    <cofactor evidence="1">
        <name>(R)-lipoate</name>
        <dbReference type="ChEBI" id="CHEBI:83088"/>
    </cofactor>
    <text evidence="1">Binds 1 lipoyl cofactor covalently.</text>
</comment>
<comment type="subunit">
    <text evidence="1">The glycine cleavage system is composed of four proteins: P, T, L and H.</text>
</comment>
<comment type="similarity">
    <text evidence="1">Belongs to the GcvH family.</text>
</comment>
<dbReference type="EMBL" id="AE015929">
    <property type="protein sequence ID" value="AAO04193.1"/>
    <property type="molecule type" value="Genomic_DNA"/>
</dbReference>
<dbReference type="RefSeq" id="NP_764151.1">
    <property type="nucleotide sequence ID" value="NC_004461.1"/>
</dbReference>
<dbReference type="RefSeq" id="WP_001831963.1">
    <property type="nucleotide sequence ID" value="NZ_WBME01000029.1"/>
</dbReference>
<dbReference type="SMR" id="Q8CPW8"/>
<dbReference type="KEGG" id="sep:SE_0596"/>
<dbReference type="PATRIC" id="fig|176280.10.peg.568"/>
<dbReference type="eggNOG" id="COG0509">
    <property type="taxonomic scope" value="Bacteria"/>
</dbReference>
<dbReference type="HOGENOM" id="CLU_097408_2_0_9"/>
<dbReference type="OrthoDB" id="9796712at2"/>
<dbReference type="Proteomes" id="UP000001411">
    <property type="component" value="Chromosome"/>
</dbReference>
<dbReference type="GO" id="GO:0005829">
    <property type="term" value="C:cytosol"/>
    <property type="evidence" value="ECO:0007669"/>
    <property type="project" value="TreeGrafter"/>
</dbReference>
<dbReference type="GO" id="GO:0005960">
    <property type="term" value="C:glycine cleavage complex"/>
    <property type="evidence" value="ECO:0007669"/>
    <property type="project" value="InterPro"/>
</dbReference>
<dbReference type="GO" id="GO:0019464">
    <property type="term" value="P:glycine decarboxylation via glycine cleavage system"/>
    <property type="evidence" value="ECO:0007669"/>
    <property type="project" value="UniProtKB-UniRule"/>
</dbReference>
<dbReference type="CDD" id="cd06848">
    <property type="entry name" value="GCS_H"/>
    <property type="match status" value="1"/>
</dbReference>
<dbReference type="Gene3D" id="2.40.50.100">
    <property type="match status" value="1"/>
</dbReference>
<dbReference type="HAMAP" id="MF_00272">
    <property type="entry name" value="GcvH"/>
    <property type="match status" value="1"/>
</dbReference>
<dbReference type="InterPro" id="IPR003016">
    <property type="entry name" value="2-oxoA_DH_lipoyl-BS"/>
</dbReference>
<dbReference type="InterPro" id="IPR000089">
    <property type="entry name" value="Biotin_lipoyl"/>
</dbReference>
<dbReference type="InterPro" id="IPR002930">
    <property type="entry name" value="GCV_H"/>
</dbReference>
<dbReference type="InterPro" id="IPR033753">
    <property type="entry name" value="GCV_H/Fam206"/>
</dbReference>
<dbReference type="InterPro" id="IPR017453">
    <property type="entry name" value="GCV_H_sub"/>
</dbReference>
<dbReference type="InterPro" id="IPR011053">
    <property type="entry name" value="Single_hybrid_motif"/>
</dbReference>
<dbReference type="NCBIfam" id="TIGR00527">
    <property type="entry name" value="gcvH"/>
    <property type="match status" value="1"/>
</dbReference>
<dbReference type="NCBIfam" id="NF002270">
    <property type="entry name" value="PRK01202.1"/>
    <property type="match status" value="1"/>
</dbReference>
<dbReference type="PANTHER" id="PTHR11715">
    <property type="entry name" value="GLYCINE CLEAVAGE SYSTEM H PROTEIN"/>
    <property type="match status" value="1"/>
</dbReference>
<dbReference type="PANTHER" id="PTHR11715:SF3">
    <property type="entry name" value="GLYCINE CLEAVAGE SYSTEM H PROTEIN-RELATED"/>
    <property type="match status" value="1"/>
</dbReference>
<dbReference type="Pfam" id="PF01597">
    <property type="entry name" value="GCV_H"/>
    <property type="match status" value="1"/>
</dbReference>
<dbReference type="SUPFAM" id="SSF51230">
    <property type="entry name" value="Single hybrid motif"/>
    <property type="match status" value="1"/>
</dbReference>
<dbReference type="PROSITE" id="PS50968">
    <property type="entry name" value="BIOTINYL_LIPOYL"/>
    <property type="match status" value="1"/>
</dbReference>
<dbReference type="PROSITE" id="PS00189">
    <property type="entry name" value="LIPOYL"/>
    <property type="match status" value="1"/>
</dbReference>
<sequence length="126" mass="14216">MAVPSEFKYSKEHEWVKIENNVATVGITEYAQNELGDIVFVELPETDDELNEGDTFGSVESVKTVSELYAPISGKIVEVNEELEDSPEFVNESPYEKAWMVKIEISDDSQLEELLSADQYSEMIGE</sequence>
<evidence type="ECO:0000255" key="1">
    <source>
        <dbReference type="HAMAP-Rule" id="MF_00272"/>
    </source>
</evidence>
<evidence type="ECO:0000255" key="2">
    <source>
        <dbReference type="PROSITE-ProRule" id="PRU01066"/>
    </source>
</evidence>
<keyword id="KW-0450">Lipoyl</keyword>
<organism>
    <name type="scientific">Staphylococcus epidermidis (strain ATCC 12228 / FDA PCI 1200)</name>
    <dbReference type="NCBI Taxonomy" id="176280"/>
    <lineage>
        <taxon>Bacteria</taxon>
        <taxon>Bacillati</taxon>
        <taxon>Bacillota</taxon>
        <taxon>Bacilli</taxon>
        <taxon>Bacillales</taxon>
        <taxon>Staphylococcaceae</taxon>
        <taxon>Staphylococcus</taxon>
    </lineage>
</organism>
<gene>
    <name evidence="1" type="primary">gcvH</name>
    <name type="ordered locus">SE_0596</name>
</gene>
<reference key="1">
    <citation type="journal article" date="2003" name="Mol. Microbiol.">
        <title>Genome-based analysis of virulence genes in a non-biofilm-forming Staphylococcus epidermidis strain (ATCC 12228).</title>
        <authorList>
            <person name="Zhang Y.-Q."/>
            <person name="Ren S.-X."/>
            <person name="Li H.-L."/>
            <person name="Wang Y.-X."/>
            <person name="Fu G."/>
            <person name="Yang J."/>
            <person name="Qin Z.-Q."/>
            <person name="Miao Y.-G."/>
            <person name="Wang W.-Y."/>
            <person name="Chen R.-S."/>
            <person name="Shen Y."/>
            <person name="Chen Z."/>
            <person name="Yuan Z.-H."/>
            <person name="Zhao G.-P."/>
            <person name="Qu D."/>
            <person name="Danchin A."/>
            <person name="Wen Y.-M."/>
        </authorList>
    </citation>
    <scope>NUCLEOTIDE SEQUENCE [LARGE SCALE GENOMIC DNA]</scope>
    <source>
        <strain>ATCC 12228 / FDA PCI 1200</strain>
    </source>
</reference>
<accession>Q8CPW8</accession>
<name>GCSH_STAES</name>
<protein>
    <recommendedName>
        <fullName evidence="1">Glycine cleavage system H protein</fullName>
    </recommendedName>
    <alternativeName>
        <fullName evidence="1">Octanoyl/lipoyl carrier protein</fullName>
    </alternativeName>
</protein>
<feature type="chain" id="PRO_0000166252" description="Glycine cleavage system H protein">
    <location>
        <begin position="1"/>
        <end position="126"/>
    </location>
</feature>
<feature type="domain" description="Lipoyl-binding" evidence="2">
    <location>
        <begin position="22"/>
        <end position="104"/>
    </location>
</feature>
<feature type="modified residue" description="N6-lipoyllysine" evidence="1">
    <location>
        <position position="63"/>
    </location>
</feature>